<proteinExistence type="evidence at protein level"/>
<sequence>MPTINFGGVEENVVTSEEFTLKKAREVLKNEVITVLGYGVQGPAQALNLKDNGFEVIIGQLEGDAYWEKAIADGFVPGKTLFPIEEAAKKGTIIKMLLSDAGQVAVWPKVKKCLKKGDALYFSHGFGIVYKDQTGIVPPKNVDVILVAPKGSGTNVRRNFKDGSGINSSYAVFQDATGRAEERTIALGIAIGSGYLFPTTFEKEVFSDLTGERGVLMGCLAGTMEAQYNVLRKHGHSPSEAFNETVEELTQSLIRLVAENGMDWMFANCSTTAQRGALDWAPKFRDAVAPVFDSLYRRVKNGAETRRVLKVNSAPNYLEKLRKELDTIKNSEMWQAGAAVRALRPENRKKKK</sequence>
<comment type="function">
    <text evidence="4">Involved in the biosynthesis of branched-chain amino acids (BCAA). Catalyzes an alkyl-migration followed by a ketol-acid reduction of (S)-2-acetolactate (S2AL) to yield (R)-2,3-dihydroxy-isovalerate. In the isomerase reaction, S2AL is rearranged via a Mg-dependent methyl migration to produce 3-hydroxy-3-methyl-2-ketobutyrate (HMKB). In the reductase reaction, this 2-ketoacid undergoes a metal-dependent reduction by NADH to yield (R)-2,3-dihydroxy-isovalerate.</text>
</comment>
<comment type="catalytic activity">
    <reaction evidence="4">
        <text>(2R)-2,3-dihydroxy-3-methylbutanoate + NAD(+) = (2S)-2-acetolactate + NADH + H(+)</text>
        <dbReference type="Rhea" id="RHEA:30627"/>
        <dbReference type="ChEBI" id="CHEBI:15378"/>
        <dbReference type="ChEBI" id="CHEBI:49072"/>
        <dbReference type="ChEBI" id="CHEBI:57540"/>
        <dbReference type="ChEBI" id="CHEBI:57945"/>
        <dbReference type="ChEBI" id="CHEBI:58476"/>
        <dbReference type="EC" id="1.1.1.382"/>
    </reaction>
</comment>
<comment type="cofactor">
    <cofactor evidence="1">
        <name>Mg(2+)</name>
        <dbReference type="ChEBI" id="CHEBI:18420"/>
    </cofactor>
    <text evidence="1">Binds 2 magnesium ions per subunit.</text>
</comment>
<comment type="biophysicochemical properties">
    <kinetics>
        <KM evidence="4">32 uM for NADH (at pH 7 with S2AL as substrate)</KM>
        <text evidence="4">kcat is 0.25 sec(-1) for reductoisomerase activity with NADH (at pH 7 with S2AL as substrate).</text>
    </kinetics>
</comment>
<comment type="pathway">
    <text evidence="6">Amino-acid biosynthesis; L-isoleucine biosynthesis; L-isoleucine from 2-oxobutanoate: step 2/4.</text>
</comment>
<comment type="pathway">
    <text evidence="6">Amino-acid biosynthesis; L-valine biosynthesis; L-valine from pyruvate: step 2/4.</text>
</comment>
<comment type="similarity">
    <text evidence="6">Belongs to the ketol-acid reductoisomerase family.</text>
</comment>
<keyword id="KW-0028">Amino-acid biosynthesis</keyword>
<keyword id="KW-0100">Branched-chain amino acid biosynthesis</keyword>
<keyword id="KW-0413">Isomerase</keyword>
<keyword id="KW-0460">Magnesium</keyword>
<keyword id="KW-0479">Metal-binding</keyword>
<keyword id="KW-0520">NAD</keyword>
<keyword id="KW-0560">Oxidoreductase</keyword>
<keyword id="KW-1185">Reference proteome</keyword>
<protein>
    <recommendedName>
        <fullName evidence="5">Ketol-acid reductoisomerase (NAD(+))</fullName>
        <shortName evidence="5">KARI</shortName>
        <ecNumber evidence="4">1.1.1.382</ecNumber>
    </recommendedName>
    <alternativeName>
        <fullName evidence="6">Acetohydroxy-acid isomeroreductase</fullName>
        <shortName evidence="6">AHIR</shortName>
    </alternativeName>
    <alternativeName>
        <fullName evidence="6">Alpha-keto-beta-hydroxylacyl reductoisomerase</fullName>
    </alternativeName>
</protein>
<accession>A8ZTR0</accession>
<evidence type="ECO:0000250" key="1">
    <source>
        <dbReference type="UniProtKB" id="D0WGK0"/>
    </source>
</evidence>
<evidence type="ECO:0000255" key="2">
    <source>
        <dbReference type="PROSITE-ProRule" id="PRU01197"/>
    </source>
</evidence>
<evidence type="ECO:0000255" key="3">
    <source>
        <dbReference type="PROSITE-ProRule" id="PRU01198"/>
    </source>
</evidence>
<evidence type="ECO:0000269" key="4">
    <source>
    </source>
</evidence>
<evidence type="ECO:0000303" key="5">
    <source>
    </source>
</evidence>
<evidence type="ECO:0000305" key="6"/>
<evidence type="ECO:0000312" key="7">
    <source>
        <dbReference type="EMBL" id="ABW67843.1"/>
    </source>
</evidence>
<name>ILVC_DESOH</name>
<gene>
    <name evidence="7" type="ordered locus">Dole_2039</name>
</gene>
<organism>
    <name type="scientific">Desulfosudis oleivorans (strain DSM 6200 / JCM 39069 / Hxd3)</name>
    <name type="common">Desulfococcus oleovorans</name>
    <dbReference type="NCBI Taxonomy" id="96561"/>
    <lineage>
        <taxon>Bacteria</taxon>
        <taxon>Pseudomonadati</taxon>
        <taxon>Thermodesulfobacteriota</taxon>
        <taxon>Desulfobacteria</taxon>
        <taxon>Desulfobacterales</taxon>
        <taxon>Desulfosudaceae</taxon>
        <taxon>Desulfosudis</taxon>
    </lineage>
</organism>
<reference key="1">
    <citation type="submission" date="2007-10" db="EMBL/GenBank/DDBJ databases">
        <title>Complete sequence of Desulfococcus oleovorans Hxd3.</title>
        <authorList>
            <consortium name="US DOE Joint Genome Institute"/>
            <person name="Copeland A."/>
            <person name="Lucas S."/>
            <person name="Lapidus A."/>
            <person name="Barry K."/>
            <person name="Glavina del Rio T."/>
            <person name="Dalin E."/>
            <person name="Tice H."/>
            <person name="Pitluck S."/>
            <person name="Kiss H."/>
            <person name="Brettin T."/>
            <person name="Bruce D."/>
            <person name="Detter J.C."/>
            <person name="Han C."/>
            <person name="Schmutz J."/>
            <person name="Larimer F."/>
            <person name="Land M."/>
            <person name="Hauser L."/>
            <person name="Kyrpides N."/>
            <person name="Kim E."/>
            <person name="Wawrik B."/>
            <person name="Richardson P."/>
        </authorList>
    </citation>
    <scope>NUCLEOTIDE SEQUENCE [LARGE SCALE GENOMIC DNA]</scope>
    <source>
        <strain>DSM 6200 / JCM 39069 / Hxd3</strain>
    </source>
</reference>
<reference key="2">
    <citation type="journal article" date="2014" name="Metab. Eng.">
        <title>Uncovering rare NADH-preferring ketol-acid reductoisomerases.</title>
        <authorList>
            <person name="Brinkmann-Chen S."/>
            <person name="Cahn J.K."/>
            <person name="Arnold F.H."/>
        </authorList>
    </citation>
    <scope>FUNCTION</scope>
    <scope>CATALYTIC ACTIVITY</scope>
    <scope>BIOPHYSICOCHEMICAL PROPERTIES</scope>
</reference>
<feature type="chain" id="PRO_0000436832" description="Ketol-acid reductoisomerase (NAD(+))">
    <location>
        <begin position="1"/>
        <end position="352"/>
    </location>
</feature>
<feature type="domain" description="KARI N-terminal Rossmann" evidence="2">
    <location>
        <begin position="11"/>
        <end position="199"/>
    </location>
</feature>
<feature type="domain" description="KARI C-terminal knotted" evidence="3">
    <location>
        <begin position="200"/>
        <end position="347"/>
    </location>
</feature>
<feature type="active site" evidence="1">
    <location>
        <position position="124"/>
    </location>
</feature>
<feature type="binding site" evidence="1">
    <location>
        <begin position="38"/>
        <end position="41"/>
    </location>
    <ligand>
        <name>NAD(+)</name>
        <dbReference type="ChEBI" id="CHEBI:57540"/>
    </ligand>
</feature>
<feature type="binding site" evidence="1">
    <location>
        <begin position="100"/>
        <end position="103"/>
    </location>
    <ligand>
        <name>NAD(+)</name>
        <dbReference type="ChEBI" id="CHEBI:57540"/>
    </ligand>
</feature>
<feature type="binding site" evidence="1">
    <location>
        <position position="153"/>
    </location>
    <ligand>
        <name>NAD(+)</name>
        <dbReference type="ChEBI" id="CHEBI:57540"/>
    </ligand>
</feature>
<feature type="binding site" evidence="1">
    <location>
        <position position="208"/>
    </location>
    <ligand>
        <name>Mg(2+)</name>
        <dbReference type="ChEBI" id="CHEBI:18420"/>
        <label>1</label>
    </ligand>
</feature>
<feature type="binding site" evidence="1">
    <location>
        <position position="208"/>
    </location>
    <ligand>
        <name>Mg(2+)</name>
        <dbReference type="ChEBI" id="CHEBI:18420"/>
        <label>2</label>
    </ligand>
</feature>
<feature type="binding site" evidence="1">
    <location>
        <position position="212"/>
    </location>
    <ligand>
        <name>Mg(2+)</name>
        <dbReference type="ChEBI" id="CHEBI:18420"/>
        <label>1</label>
    </ligand>
</feature>
<feature type="binding site" evidence="1">
    <location>
        <position position="244"/>
    </location>
    <ligand>
        <name>Mg(2+)</name>
        <dbReference type="ChEBI" id="CHEBI:18420"/>
        <label>2</label>
    </ligand>
</feature>
<feature type="binding site" evidence="1">
    <location>
        <position position="248"/>
    </location>
    <ligand>
        <name>Mg(2+)</name>
        <dbReference type="ChEBI" id="CHEBI:18420"/>
        <label>2</label>
    </ligand>
</feature>
<feature type="binding site" evidence="1">
    <location>
        <position position="270"/>
    </location>
    <ligand>
        <name>substrate</name>
    </ligand>
</feature>
<dbReference type="EC" id="1.1.1.382" evidence="4"/>
<dbReference type="EMBL" id="CP000859">
    <property type="protein sequence ID" value="ABW67843.1"/>
    <property type="molecule type" value="Genomic_DNA"/>
</dbReference>
<dbReference type="RefSeq" id="WP_012175455.1">
    <property type="nucleotide sequence ID" value="NC_009943.1"/>
</dbReference>
<dbReference type="SMR" id="A8ZTR0"/>
<dbReference type="STRING" id="96561.Dole_2039"/>
<dbReference type="KEGG" id="dol:Dole_2039"/>
<dbReference type="eggNOG" id="COG0059">
    <property type="taxonomic scope" value="Bacteria"/>
</dbReference>
<dbReference type="HOGENOM" id="CLU_033821_1_2_7"/>
<dbReference type="OrthoDB" id="9804088at2"/>
<dbReference type="UniPathway" id="UPA00047">
    <property type="reaction ID" value="UER00056"/>
</dbReference>
<dbReference type="UniPathway" id="UPA00049">
    <property type="reaction ID" value="UER00060"/>
</dbReference>
<dbReference type="Proteomes" id="UP000008561">
    <property type="component" value="Chromosome"/>
</dbReference>
<dbReference type="GO" id="GO:0016853">
    <property type="term" value="F:isomerase activity"/>
    <property type="evidence" value="ECO:0007669"/>
    <property type="project" value="UniProtKB-KW"/>
</dbReference>
<dbReference type="GO" id="GO:0004455">
    <property type="term" value="F:ketol-acid reductoisomerase activity"/>
    <property type="evidence" value="ECO:0007669"/>
    <property type="project" value="InterPro"/>
</dbReference>
<dbReference type="GO" id="GO:0046872">
    <property type="term" value="F:metal ion binding"/>
    <property type="evidence" value="ECO:0007669"/>
    <property type="project" value="UniProtKB-KW"/>
</dbReference>
<dbReference type="GO" id="GO:0009097">
    <property type="term" value="P:isoleucine biosynthetic process"/>
    <property type="evidence" value="ECO:0007669"/>
    <property type="project" value="UniProtKB-UniPathway"/>
</dbReference>
<dbReference type="GO" id="GO:0009099">
    <property type="term" value="P:L-valine biosynthetic process"/>
    <property type="evidence" value="ECO:0007669"/>
    <property type="project" value="UniProtKB-UniPathway"/>
</dbReference>
<dbReference type="FunFam" id="1.10.1040.10:FF:000003">
    <property type="entry name" value="Ketol-acid reductoisomerase, mitochondrial"/>
    <property type="match status" value="1"/>
</dbReference>
<dbReference type="Gene3D" id="1.10.1040.10">
    <property type="entry name" value="N-(1-d-carboxylethyl)-l-norvaline Dehydrogenase, domain 2"/>
    <property type="match status" value="3"/>
</dbReference>
<dbReference type="Gene3D" id="3.40.50.720">
    <property type="entry name" value="NAD(P)-binding Rossmann-like Domain"/>
    <property type="match status" value="1"/>
</dbReference>
<dbReference type="InterPro" id="IPR008927">
    <property type="entry name" value="6-PGluconate_DH-like_C_sf"/>
</dbReference>
<dbReference type="InterPro" id="IPR013328">
    <property type="entry name" value="6PGD_dom2"/>
</dbReference>
<dbReference type="InterPro" id="IPR013023">
    <property type="entry name" value="KARI"/>
</dbReference>
<dbReference type="InterPro" id="IPR000506">
    <property type="entry name" value="KARI_C"/>
</dbReference>
<dbReference type="InterPro" id="IPR013116">
    <property type="entry name" value="KARI_N"/>
</dbReference>
<dbReference type="InterPro" id="IPR036291">
    <property type="entry name" value="NAD(P)-bd_dom_sf"/>
</dbReference>
<dbReference type="NCBIfam" id="TIGR00465">
    <property type="entry name" value="ilvC"/>
    <property type="match status" value="1"/>
</dbReference>
<dbReference type="PANTHER" id="PTHR21371">
    <property type="entry name" value="KETOL-ACID REDUCTOISOMERASE, MITOCHONDRIAL"/>
    <property type="match status" value="1"/>
</dbReference>
<dbReference type="PANTHER" id="PTHR21371:SF1">
    <property type="entry name" value="KETOL-ACID REDUCTOISOMERASE, MITOCHONDRIAL"/>
    <property type="match status" value="1"/>
</dbReference>
<dbReference type="Pfam" id="PF01450">
    <property type="entry name" value="KARI_C"/>
    <property type="match status" value="1"/>
</dbReference>
<dbReference type="Pfam" id="PF07991">
    <property type="entry name" value="KARI_N"/>
    <property type="match status" value="1"/>
</dbReference>
<dbReference type="SUPFAM" id="SSF48179">
    <property type="entry name" value="6-phosphogluconate dehydrogenase C-terminal domain-like"/>
    <property type="match status" value="1"/>
</dbReference>
<dbReference type="SUPFAM" id="SSF51735">
    <property type="entry name" value="NAD(P)-binding Rossmann-fold domains"/>
    <property type="match status" value="1"/>
</dbReference>
<dbReference type="PROSITE" id="PS51851">
    <property type="entry name" value="KARI_C"/>
    <property type="match status" value="1"/>
</dbReference>
<dbReference type="PROSITE" id="PS51850">
    <property type="entry name" value="KARI_N"/>
    <property type="match status" value="1"/>
</dbReference>